<evidence type="ECO:0000255" key="1">
    <source>
        <dbReference type="HAMAP-Rule" id="MF_01849"/>
    </source>
</evidence>
<evidence type="ECO:0000255" key="2">
    <source>
        <dbReference type="PROSITE-ProRule" id="PRU01266"/>
    </source>
</evidence>
<reference key="1">
    <citation type="journal article" date="2007" name="J. Bacteriol.">
        <title>Complete genome of acute rheumatic fever-associated serotype M5 Streptococcus pyogenes strain Manfredo.</title>
        <authorList>
            <person name="Holden M.T.G."/>
            <person name="Scott A."/>
            <person name="Cherevach I."/>
            <person name="Chillingworth T."/>
            <person name="Churcher C."/>
            <person name="Cronin A."/>
            <person name="Dowd L."/>
            <person name="Feltwell T."/>
            <person name="Hamlin N."/>
            <person name="Holroyd S."/>
            <person name="Jagels K."/>
            <person name="Moule S."/>
            <person name="Mungall K."/>
            <person name="Quail M.A."/>
            <person name="Price C."/>
            <person name="Rabbinowitsch E."/>
            <person name="Sharp S."/>
            <person name="Skelton J."/>
            <person name="Whitehead S."/>
            <person name="Barrell B.G."/>
            <person name="Kehoe M."/>
            <person name="Parkhill J."/>
        </authorList>
    </citation>
    <scope>NUCLEOTIDE SEQUENCE [LARGE SCALE GENOMIC DNA]</scope>
    <source>
        <strain>Manfredo</strain>
    </source>
</reference>
<keyword id="KW-0004">4Fe-4S</keyword>
<keyword id="KW-0963">Cytoplasm</keyword>
<keyword id="KW-1015">Disulfide bond</keyword>
<keyword id="KW-0408">Iron</keyword>
<keyword id="KW-0411">Iron-sulfur</keyword>
<keyword id="KW-0479">Metal-binding</keyword>
<keyword id="KW-0489">Methyltransferase</keyword>
<keyword id="KW-0698">rRNA processing</keyword>
<keyword id="KW-0949">S-adenosyl-L-methionine</keyword>
<keyword id="KW-0808">Transferase</keyword>
<keyword id="KW-0819">tRNA processing</keyword>
<dbReference type="EC" id="2.1.1.192" evidence="1"/>
<dbReference type="EMBL" id="AM295007">
    <property type="protein sequence ID" value="CAM29926.1"/>
    <property type="molecule type" value="Genomic_DNA"/>
</dbReference>
<dbReference type="RefSeq" id="WP_011184761.1">
    <property type="nucleotide sequence ID" value="NC_009332.1"/>
</dbReference>
<dbReference type="SMR" id="A2RDK1"/>
<dbReference type="KEGG" id="spf:SpyM50591"/>
<dbReference type="HOGENOM" id="CLU_029101_0_1_9"/>
<dbReference type="GO" id="GO:0005737">
    <property type="term" value="C:cytoplasm"/>
    <property type="evidence" value="ECO:0007669"/>
    <property type="project" value="UniProtKB-SubCell"/>
</dbReference>
<dbReference type="GO" id="GO:0051539">
    <property type="term" value="F:4 iron, 4 sulfur cluster binding"/>
    <property type="evidence" value="ECO:0007669"/>
    <property type="project" value="UniProtKB-UniRule"/>
</dbReference>
<dbReference type="GO" id="GO:0046872">
    <property type="term" value="F:metal ion binding"/>
    <property type="evidence" value="ECO:0007669"/>
    <property type="project" value="UniProtKB-KW"/>
</dbReference>
<dbReference type="GO" id="GO:0070040">
    <property type="term" value="F:rRNA (adenine(2503)-C2-)-methyltransferase activity"/>
    <property type="evidence" value="ECO:0007669"/>
    <property type="project" value="UniProtKB-UniRule"/>
</dbReference>
<dbReference type="GO" id="GO:0019843">
    <property type="term" value="F:rRNA binding"/>
    <property type="evidence" value="ECO:0007669"/>
    <property type="project" value="UniProtKB-UniRule"/>
</dbReference>
<dbReference type="GO" id="GO:0002935">
    <property type="term" value="F:tRNA (adenine(37)-C2)-methyltransferase activity"/>
    <property type="evidence" value="ECO:0007669"/>
    <property type="project" value="UniProtKB-UniRule"/>
</dbReference>
<dbReference type="GO" id="GO:0000049">
    <property type="term" value="F:tRNA binding"/>
    <property type="evidence" value="ECO:0007669"/>
    <property type="project" value="UniProtKB-UniRule"/>
</dbReference>
<dbReference type="GO" id="GO:0070475">
    <property type="term" value="P:rRNA base methylation"/>
    <property type="evidence" value="ECO:0007669"/>
    <property type="project" value="UniProtKB-UniRule"/>
</dbReference>
<dbReference type="GO" id="GO:0030488">
    <property type="term" value="P:tRNA methylation"/>
    <property type="evidence" value="ECO:0007669"/>
    <property type="project" value="UniProtKB-UniRule"/>
</dbReference>
<dbReference type="CDD" id="cd01335">
    <property type="entry name" value="Radical_SAM"/>
    <property type="match status" value="1"/>
</dbReference>
<dbReference type="FunFam" id="3.20.20.70:FF:000014">
    <property type="entry name" value="Probable dual-specificity RNA methyltransferase RlmN"/>
    <property type="match status" value="1"/>
</dbReference>
<dbReference type="Gene3D" id="1.10.150.530">
    <property type="match status" value="1"/>
</dbReference>
<dbReference type="Gene3D" id="3.20.20.70">
    <property type="entry name" value="Aldolase class I"/>
    <property type="match status" value="1"/>
</dbReference>
<dbReference type="HAMAP" id="MF_01849">
    <property type="entry name" value="RNA_methyltr_RlmN"/>
    <property type="match status" value="1"/>
</dbReference>
<dbReference type="InterPro" id="IPR013785">
    <property type="entry name" value="Aldolase_TIM"/>
</dbReference>
<dbReference type="InterPro" id="IPR040072">
    <property type="entry name" value="Methyltransferase_A"/>
</dbReference>
<dbReference type="InterPro" id="IPR048641">
    <property type="entry name" value="RlmN_N"/>
</dbReference>
<dbReference type="InterPro" id="IPR027492">
    <property type="entry name" value="RNA_MTrfase_RlmN"/>
</dbReference>
<dbReference type="InterPro" id="IPR004383">
    <property type="entry name" value="rRNA_lsu_MTrfase_RlmN/Cfr"/>
</dbReference>
<dbReference type="InterPro" id="IPR007197">
    <property type="entry name" value="rSAM"/>
</dbReference>
<dbReference type="NCBIfam" id="TIGR00048">
    <property type="entry name" value="rRNA_mod_RlmN"/>
    <property type="match status" value="1"/>
</dbReference>
<dbReference type="PANTHER" id="PTHR30544">
    <property type="entry name" value="23S RRNA METHYLTRANSFERASE"/>
    <property type="match status" value="1"/>
</dbReference>
<dbReference type="PANTHER" id="PTHR30544:SF5">
    <property type="entry name" value="RADICAL SAM CORE DOMAIN-CONTAINING PROTEIN"/>
    <property type="match status" value="1"/>
</dbReference>
<dbReference type="Pfam" id="PF04055">
    <property type="entry name" value="Radical_SAM"/>
    <property type="match status" value="1"/>
</dbReference>
<dbReference type="Pfam" id="PF21016">
    <property type="entry name" value="RlmN_N"/>
    <property type="match status" value="1"/>
</dbReference>
<dbReference type="PIRSF" id="PIRSF006004">
    <property type="entry name" value="CHP00048"/>
    <property type="match status" value="1"/>
</dbReference>
<dbReference type="SFLD" id="SFLDF00275">
    <property type="entry name" value="adenosine_C2_methyltransferase"/>
    <property type="match status" value="1"/>
</dbReference>
<dbReference type="SFLD" id="SFLDG01062">
    <property type="entry name" value="methyltransferase_(Class_A)"/>
    <property type="match status" value="1"/>
</dbReference>
<dbReference type="SUPFAM" id="SSF102114">
    <property type="entry name" value="Radical SAM enzymes"/>
    <property type="match status" value="1"/>
</dbReference>
<dbReference type="PROSITE" id="PS51918">
    <property type="entry name" value="RADICAL_SAM"/>
    <property type="match status" value="1"/>
</dbReference>
<name>RLMN_STRPG</name>
<accession>A2RDK1</accession>
<feature type="chain" id="PRO_0000350466" description="Probable dual-specificity RNA methyltransferase RlmN">
    <location>
        <begin position="1"/>
        <end position="359"/>
    </location>
</feature>
<feature type="domain" description="Radical SAM core" evidence="2">
    <location>
        <begin position="97"/>
        <end position="329"/>
    </location>
</feature>
<feature type="active site" description="Proton acceptor" evidence="1">
    <location>
        <position position="91"/>
    </location>
</feature>
<feature type="active site" description="S-methylcysteine intermediate" evidence="1">
    <location>
        <position position="340"/>
    </location>
</feature>
<feature type="binding site" evidence="1">
    <location>
        <position position="111"/>
    </location>
    <ligand>
        <name>[4Fe-4S] cluster</name>
        <dbReference type="ChEBI" id="CHEBI:49883"/>
        <note>4Fe-4S-S-AdoMet</note>
    </ligand>
</feature>
<feature type="binding site" evidence="1">
    <location>
        <position position="115"/>
    </location>
    <ligand>
        <name>[4Fe-4S] cluster</name>
        <dbReference type="ChEBI" id="CHEBI:49883"/>
        <note>4Fe-4S-S-AdoMet</note>
    </ligand>
</feature>
<feature type="binding site" evidence="1">
    <location>
        <position position="118"/>
    </location>
    <ligand>
        <name>[4Fe-4S] cluster</name>
        <dbReference type="ChEBI" id="CHEBI:49883"/>
        <note>4Fe-4S-S-AdoMet</note>
    </ligand>
</feature>
<feature type="binding site" evidence="1">
    <location>
        <begin position="163"/>
        <end position="164"/>
    </location>
    <ligand>
        <name>S-adenosyl-L-methionine</name>
        <dbReference type="ChEBI" id="CHEBI:59789"/>
    </ligand>
</feature>
<feature type="binding site" evidence="1">
    <location>
        <position position="195"/>
    </location>
    <ligand>
        <name>S-adenosyl-L-methionine</name>
        <dbReference type="ChEBI" id="CHEBI:59789"/>
    </ligand>
</feature>
<feature type="binding site" evidence="1">
    <location>
        <begin position="218"/>
        <end position="220"/>
    </location>
    <ligand>
        <name>S-adenosyl-L-methionine</name>
        <dbReference type="ChEBI" id="CHEBI:59789"/>
    </ligand>
</feature>
<feature type="binding site" evidence="1">
    <location>
        <position position="296"/>
    </location>
    <ligand>
        <name>S-adenosyl-L-methionine</name>
        <dbReference type="ChEBI" id="CHEBI:59789"/>
    </ligand>
</feature>
<feature type="disulfide bond" description="(transient)" evidence="1">
    <location>
        <begin position="104"/>
        <end position="340"/>
    </location>
</feature>
<comment type="function">
    <text evidence="1">Specifically methylates position 2 of adenine 2503 in 23S rRNA and position 2 of adenine 37 in tRNAs.</text>
</comment>
<comment type="catalytic activity">
    <reaction evidence="1">
        <text>adenosine(2503) in 23S rRNA + 2 reduced [2Fe-2S]-[ferredoxin] + 2 S-adenosyl-L-methionine = 2-methyladenosine(2503) in 23S rRNA + 5'-deoxyadenosine + L-methionine + 2 oxidized [2Fe-2S]-[ferredoxin] + S-adenosyl-L-homocysteine</text>
        <dbReference type="Rhea" id="RHEA:42916"/>
        <dbReference type="Rhea" id="RHEA-COMP:10000"/>
        <dbReference type="Rhea" id="RHEA-COMP:10001"/>
        <dbReference type="Rhea" id="RHEA-COMP:10152"/>
        <dbReference type="Rhea" id="RHEA-COMP:10282"/>
        <dbReference type="ChEBI" id="CHEBI:17319"/>
        <dbReference type="ChEBI" id="CHEBI:33737"/>
        <dbReference type="ChEBI" id="CHEBI:33738"/>
        <dbReference type="ChEBI" id="CHEBI:57844"/>
        <dbReference type="ChEBI" id="CHEBI:57856"/>
        <dbReference type="ChEBI" id="CHEBI:59789"/>
        <dbReference type="ChEBI" id="CHEBI:74411"/>
        <dbReference type="ChEBI" id="CHEBI:74497"/>
        <dbReference type="EC" id="2.1.1.192"/>
    </reaction>
</comment>
<comment type="catalytic activity">
    <reaction evidence="1">
        <text>adenosine(37) in tRNA + 2 reduced [2Fe-2S]-[ferredoxin] + 2 S-adenosyl-L-methionine = 2-methyladenosine(37) in tRNA + 5'-deoxyadenosine + L-methionine + 2 oxidized [2Fe-2S]-[ferredoxin] + S-adenosyl-L-homocysteine</text>
        <dbReference type="Rhea" id="RHEA:43332"/>
        <dbReference type="Rhea" id="RHEA-COMP:10000"/>
        <dbReference type="Rhea" id="RHEA-COMP:10001"/>
        <dbReference type="Rhea" id="RHEA-COMP:10162"/>
        <dbReference type="Rhea" id="RHEA-COMP:10485"/>
        <dbReference type="ChEBI" id="CHEBI:17319"/>
        <dbReference type="ChEBI" id="CHEBI:33737"/>
        <dbReference type="ChEBI" id="CHEBI:33738"/>
        <dbReference type="ChEBI" id="CHEBI:57844"/>
        <dbReference type="ChEBI" id="CHEBI:57856"/>
        <dbReference type="ChEBI" id="CHEBI:59789"/>
        <dbReference type="ChEBI" id="CHEBI:74411"/>
        <dbReference type="ChEBI" id="CHEBI:74497"/>
        <dbReference type="EC" id="2.1.1.192"/>
    </reaction>
</comment>
<comment type="cofactor">
    <cofactor evidence="1">
        <name>[4Fe-4S] cluster</name>
        <dbReference type="ChEBI" id="CHEBI:49883"/>
    </cofactor>
    <text evidence="1">Binds 1 [4Fe-4S] cluster. The cluster is coordinated with 3 cysteines and an exchangeable S-adenosyl-L-methionine.</text>
</comment>
<comment type="subcellular location">
    <subcellularLocation>
        <location evidence="1">Cytoplasm</location>
    </subcellularLocation>
</comment>
<comment type="miscellaneous">
    <text evidence="1">Reaction proceeds by a ping-pong mechanism involving intermediate methylation of a conserved cysteine residue.</text>
</comment>
<comment type="similarity">
    <text evidence="1">Belongs to the radical SAM superfamily. RlmN family.</text>
</comment>
<protein>
    <recommendedName>
        <fullName evidence="1">Probable dual-specificity RNA methyltransferase RlmN</fullName>
        <ecNumber evidence="1">2.1.1.192</ecNumber>
    </recommendedName>
    <alternativeName>
        <fullName evidence="1">23S rRNA (adenine(2503)-C(2))-methyltransferase</fullName>
    </alternativeName>
    <alternativeName>
        <fullName evidence="1">23S rRNA m2A2503 methyltransferase</fullName>
    </alternativeName>
    <alternativeName>
        <fullName evidence="1">Ribosomal RNA large subunit methyltransferase N</fullName>
    </alternativeName>
    <alternativeName>
        <fullName evidence="1">tRNA (adenine(37)-C(2))-methyltransferase</fullName>
    </alternativeName>
    <alternativeName>
        <fullName evidence="1">tRNA m2A37 methyltransferase</fullName>
    </alternativeName>
</protein>
<organism>
    <name type="scientific">Streptococcus pyogenes serotype M5 (strain Manfredo)</name>
    <dbReference type="NCBI Taxonomy" id="160491"/>
    <lineage>
        <taxon>Bacteria</taxon>
        <taxon>Bacillati</taxon>
        <taxon>Bacillota</taxon>
        <taxon>Bacilli</taxon>
        <taxon>Lactobacillales</taxon>
        <taxon>Streptococcaceae</taxon>
        <taxon>Streptococcus</taxon>
    </lineage>
</organism>
<gene>
    <name evidence="1" type="primary">rlmN</name>
    <name type="ordered locus">SpyM50591</name>
</gene>
<proteinExistence type="inferred from homology"/>
<sequence>MKPSIYSLTRDELIAWAVERGQKQFRATQIWDWLYKKRVQSFEEMTNISKDFVSILNDSFCVNPLKQRVVQESADGTVKYLFELPDGMLIETVLMRQHYGHSVCVTTQVGCNIGCTFCASGLIKKQRDLNSGEITAQIMLVQKYFDDRKQGERVSHVVVMGIGEPFDNYKNVMCFLRVINDDNGLAIGARHITVSTSGLAHKIRDFANEGVQVNLAVSLHAPNNDLRSRIMRVNRSFPLEKLFSAIEYYIEKTNRRVTFEYIMLNEVNDSIKQAQELADLTKTIRKLSYVNLIPYNPVSEHDQYSRSPKERVLAFYDVLKKNGVNCVVRQEHGTDIDAACGQLRSKTMKKDREKVTATK</sequence>